<proteinExistence type="evidence at protein level"/>
<dbReference type="EMBL" id="BX284606">
    <property type="protein sequence ID" value="CAA93757.1"/>
    <property type="molecule type" value="Genomic_DNA"/>
</dbReference>
<dbReference type="PIR" id="T24446">
    <property type="entry name" value="T24446"/>
</dbReference>
<dbReference type="RefSeq" id="NP_001407483.1">
    <property type="nucleotide sequence ID" value="NM_001420580.1"/>
</dbReference>
<dbReference type="RefSeq" id="NP_510456.1">
    <property type="nucleotide sequence ID" value="NM_078055.4"/>
</dbReference>
<dbReference type="SMR" id="Q22156"/>
<dbReference type="FunCoup" id="Q22156">
    <property type="interactions" value="378"/>
</dbReference>
<dbReference type="IntAct" id="Q22156">
    <property type="interactions" value="8"/>
</dbReference>
<dbReference type="STRING" id="6239.T04C10.4.1"/>
<dbReference type="PaxDb" id="6239-T04C10.4.2"/>
<dbReference type="EnsemblMetazoa" id="T04C10.4.1">
    <property type="protein sequence ID" value="T04C10.4.1"/>
    <property type="gene ID" value="WBGene00000221"/>
</dbReference>
<dbReference type="EnsemblMetazoa" id="T04C10.4.2">
    <property type="protein sequence ID" value="T04C10.4.2"/>
    <property type="gene ID" value="WBGene00000221"/>
</dbReference>
<dbReference type="GeneID" id="181576"/>
<dbReference type="UCSC" id="T04C10.4">
    <property type="organism name" value="c. elegans"/>
</dbReference>
<dbReference type="AGR" id="WB:WBGene00000221"/>
<dbReference type="WormBase" id="T04C10.4">
    <property type="protein sequence ID" value="CE06355"/>
    <property type="gene ID" value="WBGene00000221"/>
    <property type="gene designation" value="atf-4"/>
</dbReference>
<dbReference type="eggNOG" id="KOG4571">
    <property type="taxonomic scope" value="Eukaryota"/>
</dbReference>
<dbReference type="GeneTree" id="ENSGT00530000063801"/>
<dbReference type="HOGENOM" id="CLU_1190780_0_0_1"/>
<dbReference type="InParanoid" id="Q22156"/>
<dbReference type="OrthoDB" id="5847285at2759"/>
<dbReference type="PRO" id="PR:Q22156"/>
<dbReference type="Proteomes" id="UP000001940">
    <property type="component" value="Chromosome X"/>
</dbReference>
<dbReference type="Bgee" id="WBGene00000221">
    <property type="expression patterns" value="Expressed in larva and 4 other cell types or tissues"/>
</dbReference>
<dbReference type="GO" id="GO:0005634">
    <property type="term" value="C:nucleus"/>
    <property type="evidence" value="ECO:0000314"/>
    <property type="project" value="UniProtKB"/>
</dbReference>
<dbReference type="GO" id="GO:0001228">
    <property type="term" value="F:DNA-binding transcription activator activity, RNA polymerase II-specific"/>
    <property type="evidence" value="ECO:0000318"/>
    <property type="project" value="GO_Central"/>
</dbReference>
<dbReference type="GO" id="GO:0000977">
    <property type="term" value="F:RNA polymerase II transcription regulatory region sequence-specific DNA binding"/>
    <property type="evidence" value="ECO:0000318"/>
    <property type="project" value="GO_Central"/>
</dbReference>
<dbReference type="GO" id="GO:0070814">
    <property type="term" value="P:hydrogen sulfide biosynthetic process"/>
    <property type="evidence" value="ECO:0000315"/>
    <property type="project" value="UniProtKB"/>
</dbReference>
<dbReference type="GO" id="GO:0010628">
    <property type="term" value="P:positive regulation of gene expression"/>
    <property type="evidence" value="ECO:0000315"/>
    <property type="project" value="UniProtKB"/>
</dbReference>
<dbReference type="GO" id="GO:0006357">
    <property type="term" value="P:regulation of transcription by RNA polymerase II"/>
    <property type="evidence" value="ECO:0000318"/>
    <property type="project" value="GO_Central"/>
</dbReference>
<dbReference type="CDD" id="cd14692">
    <property type="entry name" value="bZIP_ATF4"/>
    <property type="match status" value="1"/>
</dbReference>
<dbReference type="FunFam" id="1.20.5.170:FF:000021">
    <property type="entry name" value="Cyclic AMP-dependent transcription factor ATF-4"/>
    <property type="match status" value="1"/>
</dbReference>
<dbReference type="Gene3D" id="1.20.5.170">
    <property type="match status" value="1"/>
</dbReference>
<dbReference type="InterPro" id="IPR004827">
    <property type="entry name" value="bZIP"/>
</dbReference>
<dbReference type="InterPro" id="IPR046347">
    <property type="entry name" value="bZIP_sf"/>
</dbReference>
<dbReference type="PANTHER" id="PTHR13044">
    <property type="entry name" value="ACTIVATING TRANSCRIPTION FACTOR ATF 4/5"/>
    <property type="match status" value="1"/>
</dbReference>
<dbReference type="PANTHER" id="PTHR13044:SF14">
    <property type="entry name" value="CRYPTOCEPHAL, ISOFORM A"/>
    <property type="match status" value="1"/>
</dbReference>
<dbReference type="Pfam" id="PF00170">
    <property type="entry name" value="bZIP_1"/>
    <property type="match status" value="1"/>
</dbReference>
<dbReference type="SMART" id="SM00338">
    <property type="entry name" value="BRLZ"/>
    <property type="match status" value="1"/>
</dbReference>
<dbReference type="SUPFAM" id="SSF57959">
    <property type="entry name" value="Leucine zipper domain"/>
    <property type="match status" value="1"/>
</dbReference>
<dbReference type="PROSITE" id="PS50217">
    <property type="entry name" value="BZIP"/>
    <property type="match status" value="1"/>
</dbReference>
<dbReference type="PROSITE" id="PS00036">
    <property type="entry name" value="BZIP_BASIC"/>
    <property type="match status" value="1"/>
</dbReference>
<organism evidence="8">
    <name type="scientific">Caenorhabditis elegans</name>
    <dbReference type="NCBI Taxonomy" id="6239"/>
    <lineage>
        <taxon>Eukaryota</taxon>
        <taxon>Metazoa</taxon>
        <taxon>Ecdysozoa</taxon>
        <taxon>Nematoda</taxon>
        <taxon>Chromadorea</taxon>
        <taxon>Rhabditida</taxon>
        <taxon>Rhabditina</taxon>
        <taxon>Rhabditomorpha</taxon>
        <taxon>Rhabditoidea</taxon>
        <taxon>Rhabditidae</taxon>
        <taxon>Peloderinae</taxon>
        <taxon>Caenorhabditis</taxon>
    </lineage>
</organism>
<sequence length="208" mass="24573">MAYVNEQNPQFLLYNGMHNQTHSTPQYHNHHHHHHQSPTYPQSYFNPYSHQSYQQHHLNSDVNFQMVPQSTSVPPDPFCSIEPMETNVQAKEQILEEIVRECEEIERRSNSSASPASNWSSDEHDSQSEKSYHPYKTPEKKERKKAQNRLAATRYREKKRREKEEAMTCIEGLSVTNGKLKDQVSELEREIRYFKKFMTEMGMKTVTD</sequence>
<keyword id="KW-0238">DNA-binding</keyword>
<keyword id="KW-0539">Nucleus</keyword>
<keyword id="KW-1185">Reference proteome</keyword>
<keyword id="KW-0804">Transcription</keyword>
<keyword id="KW-0805">Transcription regulation</keyword>
<evidence type="ECO:0000250" key="1">
    <source>
        <dbReference type="UniProtKB" id="P18848"/>
    </source>
</evidence>
<evidence type="ECO:0000255" key="2">
    <source>
        <dbReference type="PROSITE-ProRule" id="PRU00978"/>
    </source>
</evidence>
<evidence type="ECO:0000256" key="3">
    <source>
        <dbReference type="SAM" id="MobiDB-lite"/>
    </source>
</evidence>
<evidence type="ECO:0000269" key="4">
    <source>
    </source>
</evidence>
<evidence type="ECO:0000303" key="5">
    <source>
    </source>
</evidence>
<evidence type="ECO:0000305" key="6"/>
<evidence type="ECO:0000305" key="7">
    <source>
    </source>
</evidence>
<evidence type="ECO:0000312" key="8">
    <source>
        <dbReference type="Proteomes" id="UP000001940"/>
    </source>
</evidence>
<evidence type="ECO:0000312" key="9">
    <source>
        <dbReference type="WormBase" id="T04C10.4"/>
    </source>
</evidence>
<gene>
    <name evidence="9" type="primary">atf-4</name>
    <name evidence="9" type="synonym">atf-5</name>
    <name evidence="9" type="ORF">T04C10.4</name>
</gene>
<feature type="chain" id="PRO_0000455978" description="Transcription factor atf-4 homolog">
    <location>
        <begin position="1"/>
        <end position="208"/>
    </location>
</feature>
<feature type="domain" description="bZIP" evidence="2">
    <location>
        <begin position="138"/>
        <end position="201"/>
    </location>
</feature>
<feature type="region of interest" description="Disordered" evidence="3">
    <location>
        <begin position="18"/>
        <end position="47"/>
    </location>
</feature>
<feature type="region of interest" description="Disordered" evidence="3">
    <location>
        <begin position="106"/>
        <end position="165"/>
    </location>
</feature>
<feature type="region of interest" description="Basic motif" evidence="2">
    <location>
        <begin position="140"/>
        <end position="163"/>
    </location>
</feature>
<feature type="region of interest" description="Leucine-zipper" evidence="2">
    <location>
        <begin position="173"/>
        <end position="187"/>
    </location>
</feature>
<feature type="compositionally biased region" description="Low complexity" evidence="3">
    <location>
        <begin position="110"/>
        <end position="120"/>
    </location>
</feature>
<feature type="compositionally biased region" description="Basic and acidic residues" evidence="3">
    <location>
        <begin position="121"/>
        <end position="141"/>
    </location>
</feature>
<protein>
    <recommendedName>
        <fullName evidence="5">Transcription factor atf-4 homolog</fullName>
    </recommendedName>
    <alternativeName>
        <fullName evidence="9">cAMP-dependent transcription factor family member 4</fullName>
    </alternativeName>
</protein>
<comment type="function">
    <text evidence="1 4">Transcription factor (By similarity). Involved in positively modulating longevity and stress tolerance, probably acting by positively regulating expression of transsulfuration enzyme cth-2, leading to increased hydrogen sulfide production and therefore increased protein persulfidation, a protective modification of redox-reactive cysteines (PubMed:35181679). May mediate longevity and increased stress resistance induced by mTORC1 suppression (PubMed:35181679).</text>
</comment>
<comment type="interaction">
    <interactant intactId="EBI-6749607">
        <id>Q22156</id>
    </interactant>
    <interactant intactId="EBI-2914231">
        <id>Q8IG69</id>
        <label>cebp-2</label>
    </interactant>
    <organismsDiffer>false</organismsDiffer>
    <experiments>3</experiments>
</comment>
<comment type="subcellular location">
    <subcellularLocation>
        <location evidence="2 7">Nucleus</location>
    </subcellularLocation>
</comment>
<comment type="developmental stage">
    <text evidence="4">Expressed at steady levels during development and aging.</text>
</comment>
<comment type="induction">
    <text evidence="4">Positively modulated by global suppression of translation activated via integrated stress response.</text>
</comment>
<comment type="disruption phenotype">
    <text evidence="4">RNAi-mediated knockdown abrogates an increase in hydrogen-sulfide production in an mTORC2 subunit rict-1 mutant background.</text>
</comment>
<comment type="similarity">
    <text evidence="6">Belongs to the bZIP family.</text>
</comment>
<reference evidence="8" key="1">
    <citation type="journal article" date="1998" name="Science">
        <title>Genome sequence of the nematode C. elegans: a platform for investigating biology.</title>
        <authorList>
            <consortium name="The C. elegans sequencing consortium"/>
        </authorList>
    </citation>
    <scope>NUCLEOTIDE SEQUENCE [LARGE SCALE GENOMIC DNA]</scope>
    <source>
        <strain evidence="8">Bristol N2</strain>
    </source>
</reference>
<reference evidence="6" key="2">
    <citation type="journal article" date="2022" name="Nat. Commun.">
        <title>ATF-4 and hydrogen sulfide signalling mediate longevity in response to inhibition of translation or mTORC1.</title>
        <authorList>
            <person name="Statzer C."/>
            <person name="Meng J."/>
            <person name="Venz R."/>
            <person name="Bland M."/>
            <person name="Robida-Stubbs S."/>
            <person name="Patel K."/>
            <person name="Petrovic D."/>
            <person name="Emsley R."/>
            <person name="Liu P."/>
            <person name="Morantte I."/>
            <person name="Haynes C."/>
            <person name="Mair W.B."/>
            <person name="Longchamp A."/>
            <person name="Filipovic M.R."/>
            <person name="Blackwell T.K."/>
            <person name="Ewald C.Y."/>
        </authorList>
    </citation>
    <scope>FUNCTION</scope>
    <scope>SUBCELLULAR LOCATION</scope>
    <scope>INDUCTION</scope>
    <scope>DEVELOPMENTAL STAGE</scope>
    <scope>DISRUPTION PHENOTYPE</scope>
</reference>
<accession>Q22156</accession>
<name>ATF4H_CAEEL</name>